<protein>
    <recommendedName>
        <fullName evidence="1">Glutamyl-tRNA(Gln) amidotransferase subunit A</fullName>
        <shortName evidence="1">Glu-ADT subunit A</shortName>
        <ecNumber evidence="1">6.3.5.7</ecNumber>
    </recommendedName>
</protein>
<organism>
    <name type="scientific">Brucella abortus biovar 1 (strain 9-941)</name>
    <dbReference type="NCBI Taxonomy" id="262698"/>
    <lineage>
        <taxon>Bacteria</taxon>
        <taxon>Pseudomonadati</taxon>
        <taxon>Pseudomonadota</taxon>
        <taxon>Alphaproteobacteria</taxon>
        <taxon>Hyphomicrobiales</taxon>
        <taxon>Brucellaceae</taxon>
        <taxon>Brucella/Ochrobactrum group</taxon>
        <taxon>Brucella</taxon>
    </lineage>
</organism>
<evidence type="ECO:0000255" key="1">
    <source>
        <dbReference type="HAMAP-Rule" id="MF_00120"/>
    </source>
</evidence>
<comment type="function">
    <text evidence="1">Allows the formation of correctly charged Gln-tRNA(Gln) through the transamidation of misacylated Glu-tRNA(Gln) in organisms which lack glutaminyl-tRNA synthetase. The reaction takes place in the presence of glutamine and ATP through an activated gamma-phospho-Glu-tRNA(Gln).</text>
</comment>
<comment type="catalytic activity">
    <reaction evidence="1">
        <text>L-glutamyl-tRNA(Gln) + L-glutamine + ATP + H2O = L-glutaminyl-tRNA(Gln) + L-glutamate + ADP + phosphate + H(+)</text>
        <dbReference type="Rhea" id="RHEA:17521"/>
        <dbReference type="Rhea" id="RHEA-COMP:9681"/>
        <dbReference type="Rhea" id="RHEA-COMP:9684"/>
        <dbReference type="ChEBI" id="CHEBI:15377"/>
        <dbReference type="ChEBI" id="CHEBI:15378"/>
        <dbReference type="ChEBI" id="CHEBI:29985"/>
        <dbReference type="ChEBI" id="CHEBI:30616"/>
        <dbReference type="ChEBI" id="CHEBI:43474"/>
        <dbReference type="ChEBI" id="CHEBI:58359"/>
        <dbReference type="ChEBI" id="CHEBI:78520"/>
        <dbReference type="ChEBI" id="CHEBI:78521"/>
        <dbReference type="ChEBI" id="CHEBI:456216"/>
        <dbReference type="EC" id="6.3.5.7"/>
    </reaction>
</comment>
<comment type="subunit">
    <text evidence="1">Heterotrimer of A, B and C subunits.</text>
</comment>
<comment type="similarity">
    <text evidence="1">Belongs to the amidase family. GatA subfamily.</text>
</comment>
<dbReference type="EC" id="6.3.5.7" evidence="1"/>
<dbReference type="EMBL" id="AE017224">
    <property type="protein sequence ID" value="AAX76041.1"/>
    <property type="molecule type" value="Genomic_DNA"/>
</dbReference>
<dbReference type="RefSeq" id="WP_002966039.1">
    <property type="nucleotide sequence ID" value="NC_006933.1"/>
</dbReference>
<dbReference type="SMR" id="Q577Z3"/>
<dbReference type="EnsemblBacteria" id="AAX76041">
    <property type="protein sequence ID" value="AAX76041"/>
    <property type="gene ID" value="BruAb2_0630"/>
</dbReference>
<dbReference type="GeneID" id="93015467"/>
<dbReference type="KEGG" id="bmb:BruAb2_0630"/>
<dbReference type="HOGENOM" id="CLU_009600_0_3_5"/>
<dbReference type="Proteomes" id="UP000000540">
    <property type="component" value="Chromosome II"/>
</dbReference>
<dbReference type="GO" id="GO:0030956">
    <property type="term" value="C:glutamyl-tRNA(Gln) amidotransferase complex"/>
    <property type="evidence" value="ECO:0007669"/>
    <property type="project" value="InterPro"/>
</dbReference>
<dbReference type="GO" id="GO:0005524">
    <property type="term" value="F:ATP binding"/>
    <property type="evidence" value="ECO:0007669"/>
    <property type="project" value="UniProtKB-KW"/>
</dbReference>
<dbReference type="GO" id="GO:0050567">
    <property type="term" value="F:glutaminyl-tRNA synthase (glutamine-hydrolyzing) activity"/>
    <property type="evidence" value="ECO:0007669"/>
    <property type="project" value="UniProtKB-UniRule"/>
</dbReference>
<dbReference type="GO" id="GO:0006412">
    <property type="term" value="P:translation"/>
    <property type="evidence" value="ECO:0007669"/>
    <property type="project" value="UniProtKB-UniRule"/>
</dbReference>
<dbReference type="Gene3D" id="3.90.1300.10">
    <property type="entry name" value="Amidase signature (AS) domain"/>
    <property type="match status" value="1"/>
</dbReference>
<dbReference type="HAMAP" id="MF_00120">
    <property type="entry name" value="GatA"/>
    <property type="match status" value="1"/>
</dbReference>
<dbReference type="InterPro" id="IPR000120">
    <property type="entry name" value="Amidase"/>
</dbReference>
<dbReference type="InterPro" id="IPR020556">
    <property type="entry name" value="Amidase_CS"/>
</dbReference>
<dbReference type="InterPro" id="IPR023631">
    <property type="entry name" value="Amidase_dom"/>
</dbReference>
<dbReference type="InterPro" id="IPR036928">
    <property type="entry name" value="AS_sf"/>
</dbReference>
<dbReference type="InterPro" id="IPR004412">
    <property type="entry name" value="GatA"/>
</dbReference>
<dbReference type="NCBIfam" id="TIGR00132">
    <property type="entry name" value="gatA"/>
    <property type="match status" value="1"/>
</dbReference>
<dbReference type="PANTHER" id="PTHR11895:SF151">
    <property type="entry name" value="GLUTAMYL-TRNA(GLN) AMIDOTRANSFERASE SUBUNIT A"/>
    <property type="match status" value="1"/>
</dbReference>
<dbReference type="PANTHER" id="PTHR11895">
    <property type="entry name" value="TRANSAMIDASE"/>
    <property type="match status" value="1"/>
</dbReference>
<dbReference type="Pfam" id="PF01425">
    <property type="entry name" value="Amidase"/>
    <property type="match status" value="1"/>
</dbReference>
<dbReference type="SUPFAM" id="SSF75304">
    <property type="entry name" value="Amidase signature (AS) enzymes"/>
    <property type="match status" value="1"/>
</dbReference>
<dbReference type="PROSITE" id="PS00571">
    <property type="entry name" value="AMIDASES"/>
    <property type="match status" value="1"/>
</dbReference>
<keyword id="KW-0067">ATP-binding</keyword>
<keyword id="KW-0436">Ligase</keyword>
<keyword id="KW-0547">Nucleotide-binding</keyword>
<keyword id="KW-0648">Protein biosynthesis</keyword>
<reference key="1">
    <citation type="journal article" date="2005" name="J. Bacteriol.">
        <title>Completion of the genome sequence of Brucella abortus and comparison to the highly similar genomes of Brucella melitensis and Brucella suis.</title>
        <authorList>
            <person name="Halling S.M."/>
            <person name="Peterson-Burch B.D."/>
            <person name="Bricker B.J."/>
            <person name="Zuerner R.L."/>
            <person name="Qing Z."/>
            <person name="Li L.-L."/>
            <person name="Kapur V."/>
            <person name="Alt D.P."/>
            <person name="Olsen S.C."/>
        </authorList>
    </citation>
    <scope>NUCLEOTIDE SEQUENCE [LARGE SCALE GENOMIC DNA]</scope>
    <source>
        <strain>9-941</strain>
    </source>
</reference>
<accession>Q577Z3</accession>
<sequence>MSELTALTIAEARDKLKAKAITATELTDAYLSAIDAANDAINAYVAVTHDQARSMAKASDERIAKGEAGALEGIPLGVKDLFATKGVHTQACSHILDGFKPEYESTVTANLWADGAVMLGKLNMDEVAMGSSNETSYYGPVKNPWRAKGSNADLVPGGSSGGSAAAVAAHLCAGATATDTGGSIRQPAAFTGTVGIKPTYGRVSRWGTVAFASSLDQAGPIARDVRDAAILMKSMASLDLKDTTSVDLPVPDYEAALGRSVKGMKIGIPREYRVDGMPGEIEELWQKGIQYLKDAGAEIVDISLPHTKYALPAYYIVAPAEASSNLARYDGVRYGLRVPGKDIADMYEQTRAAGFGKEVKRRIMIGTYVLSAGYYDAYYLRAQKVRTLIKKDFEDVFAKGVDAILTPATPSAAFGLADEVLANDPVKMYLNDIFTVTVNMAGLPGIAVPAGLNGQGLPLGLQLIGRPFEEETLFQAAHVIEQAAGRFTPAKWW</sequence>
<name>GATA_BRUAB</name>
<feature type="chain" id="PRO_0000241079" description="Glutamyl-tRNA(Gln) amidotransferase subunit A">
    <location>
        <begin position="1"/>
        <end position="493"/>
    </location>
</feature>
<feature type="active site" description="Charge relay system" evidence="1">
    <location>
        <position position="79"/>
    </location>
</feature>
<feature type="active site" description="Charge relay system" evidence="1">
    <location>
        <position position="159"/>
    </location>
</feature>
<feature type="active site" description="Acyl-ester intermediate" evidence="1">
    <location>
        <position position="183"/>
    </location>
</feature>
<gene>
    <name evidence="1" type="primary">gatA</name>
    <name type="ordered locus">BruAb2_0630</name>
</gene>
<proteinExistence type="inferred from homology"/>